<evidence type="ECO:0000255" key="1"/>
<evidence type="ECO:0000269" key="2">
    <source>
    </source>
</evidence>
<evidence type="ECO:0000305" key="3"/>
<comment type="subcellular location">
    <subcellularLocation>
        <location>Cell inner membrane</location>
        <topology>Multi-pass membrane protein</topology>
    </subcellularLocation>
</comment>
<comment type="induction">
    <text evidence="2">By selenite or tellurite. Maximal expression was detected at concentrations of 10.0 and 0.5 micrograms/ml for sodium selenite and sodium tellurite, respectively.</text>
</comment>
<comment type="similarity">
    <text evidence="3">Belongs to the major facilitator superfamily. TsgA family.</text>
</comment>
<name>TSGA_ECOLI</name>
<dbReference type="EMBL" id="U18997">
    <property type="protein sequence ID" value="AAA58161.1"/>
    <property type="molecule type" value="Genomic_DNA"/>
</dbReference>
<dbReference type="EMBL" id="U00096">
    <property type="protein sequence ID" value="AAC76389.1"/>
    <property type="molecule type" value="Genomic_DNA"/>
</dbReference>
<dbReference type="EMBL" id="AP009048">
    <property type="protein sequence ID" value="BAE77926.1"/>
    <property type="molecule type" value="Genomic_DNA"/>
</dbReference>
<dbReference type="EMBL" id="M28363">
    <property type="protein sequence ID" value="AAA23771.2"/>
    <property type="molecule type" value="Genomic_DNA"/>
</dbReference>
<dbReference type="EMBL" id="X14202">
    <property type="status" value="NOT_ANNOTATED_CDS"/>
    <property type="molecule type" value="Genomic_DNA"/>
</dbReference>
<dbReference type="PIR" id="G65130">
    <property type="entry name" value="G65130"/>
</dbReference>
<dbReference type="RefSeq" id="NP_417823.1">
    <property type="nucleotide sequence ID" value="NC_000913.3"/>
</dbReference>
<dbReference type="RefSeq" id="WP_000185247.1">
    <property type="nucleotide sequence ID" value="NZ_STEB01000004.1"/>
</dbReference>
<dbReference type="SMR" id="P60778"/>
<dbReference type="BioGRID" id="4261086">
    <property type="interactions" value="10"/>
</dbReference>
<dbReference type="FunCoup" id="P60778">
    <property type="interactions" value="14"/>
</dbReference>
<dbReference type="STRING" id="511145.b3364"/>
<dbReference type="TCDB" id="2.A.1.7.14">
    <property type="family name" value="the major facilitator superfamily (mfs)"/>
</dbReference>
<dbReference type="PaxDb" id="511145-b3364"/>
<dbReference type="EnsemblBacteria" id="AAC76389">
    <property type="protein sequence ID" value="AAC76389"/>
    <property type="gene ID" value="b3364"/>
</dbReference>
<dbReference type="GeneID" id="75206308"/>
<dbReference type="GeneID" id="947869"/>
<dbReference type="KEGG" id="ecj:JW3327"/>
<dbReference type="KEGG" id="eco:b3364"/>
<dbReference type="KEGG" id="ecoc:C3026_18270"/>
<dbReference type="PATRIC" id="fig|1411691.4.peg.3365"/>
<dbReference type="EchoBASE" id="EB1242"/>
<dbReference type="eggNOG" id="COG0738">
    <property type="taxonomic scope" value="Bacteria"/>
</dbReference>
<dbReference type="HOGENOM" id="CLU_056916_0_0_6"/>
<dbReference type="InParanoid" id="P60778"/>
<dbReference type="OMA" id="FIVTGPI"/>
<dbReference type="OrthoDB" id="8577032at2"/>
<dbReference type="PhylomeDB" id="P60778"/>
<dbReference type="BioCyc" id="EcoCyc:YHFC-MONOMER"/>
<dbReference type="PRO" id="PR:P60778"/>
<dbReference type="Proteomes" id="UP000000625">
    <property type="component" value="Chromosome"/>
</dbReference>
<dbReference type="GO" id="GO:0005886">
    <property type="term" value="C:plasma membrane"/>
    <property type="evidence" value="ECO:0000314"/>
    <property type="project" value="EcoCyc"/>
</dbReference>
<dbReference type="GO" id="GO:0022857">
    <property type="term" value="F:transmembrane transporter activity"/>
    <property type="evidence" value="ECO:0007669"/>
    <property type="project" value="InterPro"/>
</dbReference>
<dbReference type="GO" id="GO:0072714">
    <property type="term" value="P:response to selenite ion"/>
    <property type="evidence" value="ECO:0000270"/>
    <property type="project" value="EcoCyc"/>
</dbReference>
<dbReference type="CDD" id="cd17333">
    <property type="entry name" value="MFS_FucP_MFSD4_like"/>
    <property type="match status" value="1"/>
</dbReference>
<dbReference type="FunFam" id="1.20.1250.20:FF:000032">
    <property type="entry name" value="Protein TsgA"/>
    <property type="match status" value="1"/>
</dbReference>
<dbReference type="FunFam" id="1.20.1250.20:FF:000052">
    <property type="entry name" value="Protein TsgA"/>
    <property type="match status" value="1"/>
</dbReference>
<dbReference type="Gene3D" id="1.20.1250.20">
    <property type="entry name" value="MFS general substrate transporter like domains"/>
    <property type="match status" value="2"/>
</dbReference>
<dbReference type="HAMAP" id="MF_01044">
    <property type="entry name" value="MFS_TsgA"/>
    <property type="match status" value="1"/>
</dbReference>
<dbReference type="InterPro" id="IPR011701">
    <property type="entry name" value="MFS"/>
</dbReference>
<dbReference type="InterPro" id="IPR020846">
    <property type="entry name" value="MFS_dom"/>
</dbReference>
<dbReference type="InterPro" id="IPR036259">
    <property type="entry name" value="MFS_trans_sf"/>
</dbReference>
<dbReference type="InterPro" id="IPR023528">
    <property type="entry name" value="MFS_TsgA"/>
</dbReference>
<dbReference type="InterPro" id="IPR050375">
    <property type="entry name" value="MFS_TsgA-like"/>
</dbReference>
<dbReference type="NCBIfam" id="NF002982">
    <property type="entry name" value="PRK03699.1"/>
    <property type="match status" value="1"/>
</dbReference>
<dbReference type="PANTHER" id="PTHR43702">
    <property type="entry name" value="L-FUCOSE-PROTON SYMPORTER"/>
    <property type="match status" value="1"/>
</dbReference>
<dbReference type="PANTHER" id="PTHR43702:SF3">
    <property type="entry name" value="PROTEIN TSGA"/>
    <property type="match status" value="1"/>
</dbReference>
<dbReference type="Pfam" id="PF07690">
    <property type="entry name" value="MFS_1"/>
    <property type="match status" value="1"/>
</dbReference>
<dbReference type="SUPFAM" id="SSF103473">
    <property type="entry name" value="MFS general substrate transporter"/>
    <property type="match status" value="1"/>
</dbReference>
<dbReference type="PROSITE" id="PS50850">
    <property type="entry name" value="MFS"/>
    <property type="match status" value="1"/>
</dbReference>
<sequence length="393" mass="43166">MTNSNRIKLTWISFLSYALTGALVIVTGMVMGNIADYFNLPVSSMSNTFTFLNAGILISIFLNAWLMEIVPLKTQLRFGFLLMVLAVAGLMFSHSLALFSAAMFILGVVSGITMSIGTFLVTQMYEGRQRGSRLLFTDSFFSMAGMIFPMIAAFLLARSIEWYWVYACIGLVYVAIFILTFGCEFPALGKHAPKTDAPVEKEKWGIGVLFLSVAALCYILGQLGFISWVPEYAKGLGMSLNDAGTLVSNFWMSYMVGMWAFSFILRFFDLQRILTVLAGLAAILMYVFNTGTPAHMAWSILALGFFSSAIYTTIITLGSQQTKVPSPKLVNFVLTCGTIGTMLTFVVTGPIVEHSGPQAALLTANGLYAVVFVMCFLLGFVSRHRQHNTLTSH</sequence>
<feature type="chain" id="PRO_0000206494" description="Protein TsgA">
    <location>
        <begin position="1"/>
        <end position="393"/>
    </location>
</feature>
<feature type="topological domain" description="Cytoplasmic" evidence="1">
    <location>
        <begin position="1"/>
        <end position="10"/>
    </location>
</feature>
<feature type="transmembrane region" description="Helical" evidence="1">
    <location>
        <begin position="11"/>
        <end position="31"/>
    </location>
</feature>
<feature type="topological domain" description="Periplasmic" evidence="1">
    <location>
        <begin position="32"/>
        <end position="50"/>
    </location>
</feature>
<feature type="transmembrane region" description="Helical" evidence="1">
    <location>
        <begin position="51"/>
        <end position="71"/>
    </location>
</feature>
<feature type="topological domain" description="Cytoplasmic" evidence="1">
    <location>
        <begin position="72"/>
        <end position="77"/>
    </location>
</feature>
<feature type="transmembrane region" description="Helical" evidence="1">
    <location>
        <begin position="78"/>
        <end position="98"/>
    </location>
</feature>
<feature type="topological domain" description="Periplasmic" evidence="1">
    <location>
        <begin position="99"/>
        <end position="100"/>
    </location>
</feature>
<feature type="transmembrane region" description="Helical" evidence="1">
    <location>
        <begin position="101"/>
        <end position="121"/>
    </location>
</feature>
<feature type="topological domain" description="Cytoplasmic" evidence="1">
    <location>
        <begin position="122"/>
        <end position="133"/>
    </location>
</feature>
<feature type="transmembrane region" description="Helical" evidence="1">
    <location>
        <begin position="134"/>
        <end position="154"/>
    </location>
</feature>
<feature type="topological domain" description="Periplasmic" evidence="1">
    <location>
        <begin position="155"/>
        <end position="161"/>
    </location>
</feature>
<feature type="transmembrane region" description="Helical" evidence="1">
    <location>
        <begin position="162"/>
        <end position="182"/>
    </location>
</feature>
<feature type="topological domain" description="Cytoplasmic" evidence="1">
    <location>
        <begin position="183"/>
        <end position="205"/>
    </location>
</feature>
<feature type="transmembrane region" description="Helical" evidence="1">
    <location>
        <begin position="206"/>
        <end position="226"/>
    </location>
</feature>
<feature type="topological domain" description="Periplasmic" evidence="1">
    <location>
        <begin position="227"/>
        <end position="244"/>
    </location>
</feature>
<feature type="transmembrane region" description="Helical" evidence="1">
    <location>
        <begin position="245"/>
        <end position="265"/>
    </location>
</feature>
<feature type="topological domain" description="Cytoplasmic" evidence="1">
    <location>
        <begin position="266"/>
        <end position="272"/>
    </location>
</feature>
<feature type="transmembrane region" description="Helical" evidence="1">
    <location>
        <begin position="273"/>
        <end position="293"/>
    </location>
</feature>
<feature type="topological domain" description="Periplasmic" evidence="1">
    <location>
        <begin position="294"/>
        <end position="296"/>
    </location>
</feature>
<feature type="transmembrane region" description="Helical" evidence="1">
    <location>
        <begin position="297"/>
        <end position="317"/>
    </location>
</feature>
<feature type="topological domain" description="Cytoplasmic" evidence="1">
    <location>
        <begin position="318"/>
        <end position="331"/>
    </location>
</feature>
<feature type="transmembrane region" description="Helical" evidence="1">
    <location>
        <begin position="332"/>
        <end position="352"/>
    </location>
</feature>
<feature type="topological domain" description="Periplasmic" evidence="1">
    <location>
        <begin position="353"/>
        <end position="360"/>
    </location>
</feature>
<feature type="transmembrane region" description="Helical" evidence="1">
    <location>
        <begin position="361"/>
        <end position="381"/>
    </location>
</feature>
<feature type="topological domain" description="Cytoplasmic" evidence="1">
    <location>
        <begin position="382"/>
        <end position="393"/>
    </location>
</feature>
<reference key="1">
    <citation type="journal article" date="1997" name="Science">
        <title>The complete genome sequence of Escherichia coli K-12.</title>
        <authorList>
            <person name="Blattner F.R."/>
            <person name="Plunkett G. III"/>
            <person name="Bloch C.A."/>
            <person name="Perna N.T."/>
            <person name="Burland V."/>
            <person name="Riley M."/>
            <person name="Collado-Vides J."/>
            <person name="Glasner J.D."/>
            <person name="Rode C.K."/>
            <person name="Mayhew G.F."/>
            <person name="Gregor J."/>
            <person name="Davis N.W."/>
            <person name="Kirkpatrick H.A."/>
            <person name="Goeden M.A."/>
            <person name="Rose D.J."/>
            <person name="Mau B."/>
            <person name="Shao Y."/>
        </authorList>
    </citation>
    <scope>NUCLEOTIDE SEQUENCE [LARGE SCALE GENOMIC DNA]</scope>
    <source>
        <strain>K12 / MG1655 / ATCC 47076</strain>
    </source>
</reference>
<reference key="2">
    <citation type="journal article" date="2006" name="Mol. Syst. Biol.">
        <title>Highly accurate genome sequences of Escherichia coli K-12 strains MG1655 and W3110.</title>
        <authorList>
            <person name="Hayashi K."/>
            <person name="Morooka N."/>
            <person name="Yamamoto Y."/>
            <person name="Fujita K."/>
            <person name="Isono K."/>
            <person name="Choi S."/>
            <person name="Ohtsubo E."/>
            <person name="Baba T."/>
            <person name="Wanner B.L."/>
            <person name="Mori H."/>
            <person name="Horiuchi T."/>
        </authorList>
    </citation>
    <scope>NUCLEOTIDE SEQUENCE [LARGE SCALE GENOMIC DNA]</scope>
    <source>
        <strain>K12 / W3110 / ATCC 27325 / DSM 5911</strain>
    </source>
</reference>
<reference key="3">
    <citation type="journal article" date="1989" name="J. Bacteriol.">
        <title>Nucleotide sequences of fic and fic-1 genes involved in cell filamentation induced by cyclic AMP in Escherichia coli.</title>
        <authorList>
            <person name="Kawamukai M."/>
            <person name="Matsuda H."/>
            <person name="Fujii W."/>
            <person name="Utsumi R."/>
            <person name="Komano T."/>
        </authorList>
    </citation>
    <scope>NUCLEOTIDE SEQUENCE [GENOMIC DNA] OF 31-107</scope>
</reference>
<reference key="4">
    <citation type="journal article" date="1989" name="Nucleic Acids Res.">
        <title>Cloning of binding sequences for the Escherichia coli transcription activators, FNR and CRP: location of bases involved in discrimination between FNR and CRP.</title>
        <authorList>
            <person name="Bell A.I."/>
            <person name="Gaston K.L."/>
            <person name="Cole J.A."/>
            <person name="Busby S.J.W."/>
        </authorList>
    </citation>
    <scope>NUCLEOTIDE SEQUENCE [GENOMIC DNA] OF 347-393</scope>
    <source>
        <strain>K12</strain>
    </source>
</reference>
<reference key="5">
    <citation type="journal article" date="1990" name="Eur. J. Biochem.">
        <title>Nucleotide sequence, organisation and structural analysis of the products of genes in the nirB-cysG region of the Escherichia coli K-12 chromosome.</title>
        <authorList>
            <person name="Peakman T."/>
            <person name="Crouzet J."/>
            <person name="Mayaux J.F."/>
            <person name="Busby S.J.W."/>
            <person name="Mohan S."/>
            <person name="Harborne N."/>
            <person name="Wootton J."/>
            <person name="Nicolson R."/>
            <person name="Cole J.A."/>
        </authorList>
    </citation>
    <scope>NUCLEOTIDE SEQUENCE [GENOMIC DNA] OF 347-393</scope>
    <source>
        <strain>K12</strain>
    </source>
</reference>
<reference key="6">
    <citation type="journal article" date="2000" name="Appl. Environ. Microbiol.">
        <title>A novel selenite- and tellurite-inducible gene in Escherichia coli.</title>
        <authorList>
            <person name="Guzzo J."/>
            <person name="Dubow M.S."/>
        </authorList>
    </citation>
    <scope>INDUCTION</scope>
</reference>
<reference key="7">
    <citation type="journal article" date="2005" name="Science">
        <title>Global topology analysis of the Escherichia coli inner membrane proteome.</title>
        <authorList>
            <person name="Daley D.O."/>
            <person name="Rapp M."/>
            <person name="Granseth E."/>
            <person name="Melen K."/>
            <person name="Drew D."/>
            <person name="von Heijne G."/>
        </authorList>
    </citation>
    <scope>TOPOLOGY [LARGE SCALE ANALYSIS]</scope>
    <source>
        <strain>K12 / MG1655 / ATCC 47076</strain>
    </source>
</reference>
<keyword id="KW-0997">Cell inner membrane</keyword>
<keyword id="KW-1003">Cell membrane</keyword>
<keyword id="KW-0472">Membrane</keyword>
<keyword id="KW-1185">Reference proteome</keyword>
<keyword id="KW-0812">Transmembrane</keyword>
<keyword id="KW-1133">Transmembrane helix</keyword>
<accession>P60778</accession>
<accession>P21229</accession>
<accession>P37612</accession>
<accession>Q2M730</accession>
<protein>
    <recommendedName>
        <fullName>Protein TsgA</fullName>
    </recommendedName>
</protein>
<gene>
    <name type="primary">tsgA</name>
    <name type="synonym">gutS</name>
    <name type="synonym">yhfC</name>
    <name type="synonym">yhfH</name>
    <name type="ordered locus">b3364</name>
    <name type="ordered locus">JW3327</name>
</gene>
<organism>
    <name type="scientific">Escherichia coli (strain K12)</name>
    <dbReference type="NCBI Taxonomy" id="83333"/>
    <lineage>
        <taxon>Bacteria</taxon>
        <taxon>Pseudomonadati</taxon>
        <taxon>Pseudomonadota</taxon>
        <taxon>Gammaproteobacteria</taxon>
        <taxon>Enterobacterales</taxon>
        <taxon>Enterobacteriaceae</taxon>
        <taxon>Escherichia</taxon>
    </lineage>
</organism>
<proteinExistence type="evidence at protein level"/>